<keyword id="KW-0066">ATP synthesis</keyword>
<keyword id="KW-0067">ATP-binding</keyword>
<keyword id="KW-0997">Cell inner membrane</keyword>
<keyword id="KW-1003">Cell membrane</keyword>
<keyword id="KW-0139">CF(1)</keyword>
<keyword id="KW-0375">Hydrogen ion transport</keyword>
<keyword id="KW-0406">Ion transport</keyword>
<keyword id="KW-0472">Membrane</keyword>
<keyword id="KW-0547">Nucleotide-binding</keyword>
<keyword id="KW-1185">Reference proteome</keyword>
<keyword id="KW-1278">Translocase</keyword>
<keyword id="KW-0813">Transport</keyword>
<gene>
    <name evidence="1" type="primary">atpA1</name>
    <name type="ordered locus">Nmul_A0308</name>
</gene>
<protein>
    <recommendedName>
        <fullName evidence="1">ATP synthase subunit alpha 1</fullName>
        <ecNumber evidence="1">7.1.2.2</ecNumber>
    </recommendedName>
    <alternativeName>
        <fullName evidence="1">ATP synthase F1 sector subunit alpha 1</fullName>
    </alternativeName>
    <alternativeName>
        <fullName evidence="1">F-ATPase subunit alpha 1</fullName>
    </alternativeName>
</protein>
<sequence length="513" mass="55512">MHLNPSEISELIKSRIEGLEATAEVRTQGTVVSVTDGIVRIHGLSDVMQGEMLEFPGNTFGLALNLERDSVGAVVLGEYEHITEGDTVKCTGRILEVPVGEELIGRVVNALGQPIDGKGPITTKHSEPIEKIAPGVVWRQSVNQPVQTGLKAIDAMVPIGRGQRELIIGDRQTGKTAVAVDAIINQKGENMICIYVAIGQKASSISNVVRKLEEHGAMEYTIVVAATASESAAMQFIAPYSGCTMGEYFRDTGRDALIVYDDLTKQAWAYRQISLLLRRPPGREAYPGDVFYLHSRLLERAARVSAAYVEKETNGAVKGKTGSLTALPVIETQAGDVTAFVPTNVISITDGQIFLESDLFNAGIRPAINAGISVSRVGGAAQTKVIKKLGGGVRLALAQYRELAAFAQFASDLDEATRKQLERGKMVTELMKQPQYSTLSVSEMALTLFAVNKGYLDDVEVSRALAFESALRGFIRSKYGAILDKIETTKDLDAETEKELDAAIQDFKKNGTY</sequence>
<dbReference type="EC" id="7.1.2.2" evidence="1"/>
<dbReference type="EMBL" id="CP000103">
    <property type="protein sequence ID" value="ABB73616.1"/>
    <property type="molecule type" value="Genomic_DNA"/>
</dbReference>
<dbReference type="RefSeq" id="WP_011379670.1">
    <property type="nucleotide sequence ID" value="NC_007614.1"/>
</dbReference>
<dbReference type="SMR" id="Q2YCA5"/>
<dbReference type="STRING" id="323848.Nmul_A0308"/>
<dbReference type="KEGG" id="nmu:Nmul_A0308"/>
<dbReference type="eggNOG" id="COG0056">
    <property type="taxonomic scope" value="Bacteria"/>
</dbReference>
<dbReference type="HOGENOM" id="CLU_010091_2_1_4"/>
<dbReference type="OrthoDB" id="9803053at2"/>
<dbReference type="Proteomes" id="UP000002718">
    <property type="component" value="Chromosome"/>
</dbReference>
<dbReference type="GO" id="GO:0005886">
    <property type="term" value="C:plasma membrane"/>
    <property type="evidence" value="ECO:0007669"/>
    <property type="project" value="UniProtKB-SubCell"/>
</dbReference>
<dbReference type="GO" id="GO:0045259">
    <property type="term" value="C:proton-transporting ATP synthase complex"/>
    <property type="evidence" value="ECO:0007669"/>
    <property type="project" value="UniProtKB-KW"/>
</dbReference>
<dbReference type="GO" id="GO:0043531">
    <property type="term" value="F:ADP binding"/>
    <property type="evidence" value="ECO:0007669"/>
    <property type="project" value="TreeGrafter"/>
</dbReference>
<dbReference type="GO" id="GO:0005524">
    <property type="term" value="F:ATP binding"/>
    <property type="evidence" value="ECO:0007669"/>
    <property type="project" value="UniProtKB-UniRule"/>
</dbReference>
<dbReference type="GO" id="GO:0046933">
    <property type="term" value="F:proton-transporting ATP synthase activity, rotational mechanism"/>
    <property type="evidence" value="ECO:0007669"/>
    <property type="project" value="UniProtKB-UniRule"/>
</dbReference>
<dbReference type="CDD" id="cd18113">
    <property type="entry name" value="ATP-synt_F1_alpha_C"/>
    <property type="match status" value="1"/>
</dbReference>
<dbReference type="CDD" id="cd18116">
    <property type="entry name" value="ATP-synt_F1_alpha_N"/>
    <property type="match status" value="1"/>
</dbReference>
<dbReference type="CDD" id="cd01132">
    <property type="entry name" value="F1-ATPase_alpha_CD"/>
    <property type="match status" value="1"/>
</dbReference>
<dbReference type="FunFam" id="1.20.150.20:FF:000001">
    <property type="entry name" value="ATP synthase subunit alpha"/>
    <property type="match status" value="1"/>
</dbReference>
<dbReference type="FunFam" id="2.40.30.20:FF:000001">
    <property type="entry name" value="ATP synthase subunit alpha"/>
    <property type="match status" value="1"/>
</dbReference>
<dbReference type="FunFam" id="3.40.50.300:FF:000002">
    <property type="entry name" value="ATP synthase subunit alpha"/>
    <property type="match status" value="1"/>
</dbReference>
<dbReference type="Gene3D" id="2.40.30.20">
    <property type="match status" value="1"/>
</dbReference>
<dbReference type="Gene3D" id="1.20.150.20">
    <property type="entry name" value="ATP synthase alpha/beta chain, C-terminal domain"/>
    <property type="match status" value="1"/>
</dbReference>
<dbReference type="Gene3D" id="3.40.50.300">
    <property type="entry name" value="P-loop containing nucleotide triphosphate hydrolases"/>
    <property type="match status" value="1"/>
</dbReference>
<dbReference type="HAMAP" id="MF_01346">
    <property type="entry name" value="ATP_synth_alpha_bact"/>
    <property type="match status" value="1"/>
</dbReference>
<dbReference type="InterPro" id="IPR023366">
    <property type="entry name" value="ATP_synth_asu-like_sf"/>
</dbReference>
<dbReference type="InterPro" id="IPR000793">
    <property type="entry name" value="ATP_synth_asu_C"/>
</dbReference>
<dbReference type="InterPro" id="IPR038376">
    <property type="entry name" value="ATP_synth_asu_C_sf"/>
</dbReference>
<dbReference type="InterPro" id="IPR033732">
    <property type="entry name" value="ATP_synth_F1_a_nt-bd_dom"/>
</dbReference>
<dbReference type="InterPro" id="IPR005294">
    <property type="entry name" value="ATP_synth_F1_asu"/>
</dbReference>
<dbReference type="InterPro" id="IPR020003">
    <property type="entry name" value="ATPase_a/bsu_AS"/>
</dbReference>
<dbReference type="InterPro" id="IPR004100">
    <property type="entry name" value="ATPase_F1/V1/A1_a/bsu_N"/>
</dbReference>
<dbReference type="InterPro" id="IPR036121">
    <property type="entry name" value="ATPase_F1/V1/A1_a/bsu_N_sf"/>
</dbReference>
<dbReference type="InterPro" id="IPR000194">
    <property type="entry name" value="ATPase_F1/V1/A1_a/bsu_nucl-bd"/>
</dbReference>
<dbReference type="InterPro" id="IPR027417">
    <property type="entry name" value="P-loop_NTPase"/>
</dbReference>
<dbReference type="NCBIfam" id="TIGR00962">
    <property type="entry name" value="atpA"/>
    <property type="match status" value="1"/>
</dbReference>
<dbReference type="NCBIfam" id="NF009884">
    <property type="entry name" value="PRK13343.1"/>
    <property type="match status" value="1"/>
</dbReference>
<dbReference type="PANTHER" id="PTHR48082">
    <property type="entry name" value="ATP SYNTHASE SUBUNIT ALPHA, MITOCHONDRIAL"/>
    <property type="match status" value="1"/>
</dbReference>
<dbReference type="PANTHER" id="PTHR48082:SF2">
    <property type="entry name" value="ATP SYNTHASE SUBUNIT ALPHA, MITOCHONDRIAL"/>
    <property type="match status" value="1"/>
</dbReference>
<dbReference type="Pfam" id="PF00006">
    <property type="entry name" value="ATP-synt_ab"/>
    <property type="match status" value="1"/>
</dbReference>
<dbReference type="Pfam" id="PF00306">
    <property type="entry name" value="ATP-synt_ab_C"/>
    <property type="match status" value="1"/>
</dbReference>
<dbReference type="Pfam" id="PF02874">
    <property type="entry name" value="ATP-synt_ab_N"/>
    <property type="match status" value="1"/>
</dbReference>
<dbReference type="PIRSF" id="PIRSF039088">
    <property type="entry name" value="F_ATPase_subunit_alpha"/>
    <property type="match status" value="1"/>
</dbReference>
<dbReference type="SUPFAM" id="SSF47917">
    <property type="entry name" value="C-terminal domain of alpha and beta subunits of F1 ATP synthase"/>
    <property type="match status" value="1"/>
</dbReference>
<dbReference type="SUPFAM" id="SSF50615">
    <property type="entry name" value="N-terminal domain of alpha and beta subunits of F1 ATP synthase"/>
    <property type="match status" value="1"/>
</dbReference>
<dbReference type="SUPFAM" id="SSF52540">
    <property type="entry name" value="P-loop containing nucleoside triphosphate hydrolases"/>
    <property type="match status" value="1"/>
</dbReference>
<dbReference type="PROSITE" id="PS00152">
    <property type="entry name" value="ATPASE_ALPHA_BETA"/>
    <property type="match status" value="1"/>
</dbReference>
<reference key="1">
    <citation type="submission" date="2005-08" db="EMBL/GenBank/DDBJ databases">
        <title>Complete sequence of chromosome 1 of Nitrosospira multiformis ATCC 25196.</title>
        <authorList>
            <person name="Copeland A."/>
            <person name="Lucas S."/>
            <person name="Lapidus A."/>
            <person name="Barry K."/>
            <person name="Detter J.C."/>
            <person name="Glavina T."/>
            <person name="Hammon N."/>
            <person name="Israni S."/>
            <person name="Pitluck S."/>
            <person name="Chain P."/>
            <person name="Malfatti S."/>
            <person name="Shin M."/>
            <person name="Vergez L."/>
            <person name="Schmutz J."/>
            <person name="Larimer F."/>
            <person name="Land M."/>
            <person name="Hauser L."/>
            <person name="Kyrpides N."/>
            <person name="Lykidis A."/>
            <person name="Richardson P."/>
        </authorList>
    </citation>
    <scope>NUCLEOTIDE SEQUENCE [LARGE SCALE GENOMIC DNA]</scope>
    <source>
        <strain>ATCC 25196 / NCIMB 11849 / C 71</strain>
    </source>
</reference>
<name>ATPA1_NITMU</name>
<accession>Q2YCA5</accession>
<feature type="chain" id="PRO_0000238307" description="ATP synthase subunit alpha 1">
    <location>
        <begin position="1"/>
        <end position="513"/>
    </location>
</feature>
<feature type="binding site" evidence="1">
    <location>
        <begin position="169"/>
        <end position="176"/>
    </location>
    <ligand>
        <name>ATP</name>
        <dbReference type="ChEBI" id="CHEBI:30616"/>
    </ligand>
</feature>
<feature type="site" description="Required for activity" evidence="1">
    <location>
        <position position="373"/>
    </location>
</feature>
<proteinExistence type="inferred from homology"/>
<comment type="function">
    <text evidence="1">Produces ATP from ADP in the presence of a proton gradient across the membrane. The alpha chain is a regulatory subunit.</text>
</comment>
<comment type="catalytic activity">
    <reaction evidence="1">
        <text>ATP + H2O + 4 H(+)(in) = ADP + phosphate + 5 H(+)(out)</text>
        <dbReference type="Rhea" id="RHEA:57720"/>
        <dbReference type="ChEBI" id="CHEBI:15377"/>
        <dbReference type="ChEBI" id="CHEBI:15378"/>
        <dbReference type="ChEBI" id="CHEBI:30616"/>
        <dbReference type="ChEBI" id="CHEBI:43474"/>
        <dbReference type="ChEBI" id="CHEBI:456216"/>
        <dbReference type="EC" id="7.1.2.2"/>
    </reaction>
</comment>
<comment type="subunit">
    <text evidence="1">F-type ATPases have 2 components, CF(1) - the catalytic core - and CF(0) - the membrane proton channel. CF(1) has five subunits: alpha(3), beta(3), gamma(1), delta(1), epsilon(1). CF(0) has three main subunits: a(1), b(2) and c(9-12). The alpha and beta chains form an alternating ring which encloses part of the gamma chain. CF(1) is attached to CF(0) by a central stalk formed by the gamma and epsilon chains, while a peripheral stalk is formed by the delta and b chains.</text>
</comment>
<comment type="subcellular location">
    <subcellularLocation>
        <location evidence="1">Cell inner membrane</location>
        <topology evidence="1">Peripheral membrane protein</topology>
    </subcellularLocation>
</comment>
<comment type="similarity">
    <text evidence="1">Belongs to the ATPase alpha/beta chains family.</text>
</comment>
<evidence type="ECO:0000255" key="1">
    <source>
        <dbReference type="HAMAP-Rule" id="MF_01346"/>
    </source>
</evidence>
<organism>
    <name type="scientific">Nitrosospira multiformis (strain ATCC 25196 / NCIMB 11849 / C 71)</name>
    <dbReference type="NCBI Taxonomy" id="323848"/>
    <lineage>
        <taxon>Bacteria</taxon>
        <taxon>Pseudomonadati</taxon>
        <taxon>Pseudomonadota</taxon>
        <taxon>Betaproteobacteria</taxon>
        <taxon>Nitrosomonadales</taxon>
        <taxon>Nitrosomonadaceae</taxon>
        <taxon>Nitrosospira</taxon>
    </lineage>
</organism>